<sequence length="243" mass="27540">MVKELLRNHSSVRIYDGNPISKEIIEELIATAQMAATSHFVQAYSVIWVTDEEKKEKLGMLSGNPRQYETSGGAFVFCVDFKRLQSAGKLEGVDIVADSAENVLVGVADVSLFAQNFVVAAESMGYGICYIGGVRNKPEEISELFNLPEYVFPLFGLTIGVPARRNEVKPRLPVAAVLHENEYNTEKYEELLPAYNDTMEAYYNNRSSNRKIDNWTKQMADFLIEQRRPHIKDFLAKKGFNWK</sequence>
<keyword id="KW-0285">Flavoprotein</keyword>
<keyword id="KW-0288">FMN</keyword>
<keyword id="KW-0560">Oxidoreductase</keyword>
<gene>
    <name type="primary">chrR</name>
</gene>
<protein>
    <recommendedName>
        <fullName>CR(VI) reductase</fullName>
        <ecNumber>1.-.-.-</ecNumber>
    </recommendedName>
</protein>
<reference key="1">
    <citation type="submission" date="1996-02" db="EMBL/GenBank/DDBJ databases">
        <authorList>
            <person name="Suzuki T."/>
        </authorList>
    </citation>
    <scope>NUCLEOTIDE SEQUENCE [GENOMIC DNA]</scope>
</reference>
<evidence type="ECO:0000250" key="1"/>
<evidence type="ECO:0000305" key="2"/>
<accession>P96977</accession>
<dbReference type="EC" id="1.-.-.-"/>
<dbReference type="EMBL" id="D83142">
    <property type="protein sequence ID" value="BAA11821.1"/>
    <property type="molecule type" value="Genomic_DNA"/>
</dbReference>
<dbReference type="SMR" id="P96977"/>
<dbReference type="SABIO-RK" id="P96977"/>
<dbReference type="GO" id="GO:0016491">
    <property type="term" value="F:oxidoreductase activity"/>
    <property type="evidence" value="ECO:0007669"/>
    <property type="project" value="UniProtKB-KW"/>
</dbReference>
<dbReference type="CDD" id="cd02146">
    <property type="entry name" value="NfsA-like"/>
    <property type="match status" value="1"/>
</dbReference>
<dbReference type="Gene3D" id="3.40.109.10">
    <property type="entry name" value="NADH Oxidase"/>
    <property type="match status" value="1"/>
</dbReference>
<dbReference type="InterPro" id="IPR016446">
    <property type="entry name" value="Flavin_OxRdtase_Frp"/>
</dbReference>
<dbReference type="InterPro" id="IPR029479">
    <property type="entry name" value="Nitroreductase"/>
</dbReference>
<dbReference type="InterPro" id="IPR000415">
    <property type="entry name" value="Nitroreductase-like"/>
</dbReference>
<dbReference type="NCBIfam" id="NF008033">
    <property type="entry name" value="PRK10765.1"/>
    <property type="match status" value="1"/>
</dbReference>
<dbReference type="PANTHER" id="PTHR43425:SF3">
    <property type="entry name" value="NADPH-DEPENDENT OXIDOREDUCTASE"/>
    <property type="match status" value="1"/>
</dbReference>
<dbReference type="PANTHER" id="PTHR43425">
    <property type="entry name" value="OXYGEN-INSENSITIVE NADPH NITROREDUCTASE"/>
    <property type="match status" value="1"/>
</dbReference>
<dbReference type="Pfam" id="PF00881">
    <property type="entry name" value="Nitroreductase"/>
    <property type="match status" value="1"/>
</dbReference>
<dbReference type="PIRSF" id="PIRSF005426">
    <property type="entry name" value="Frp"/>
    <property type="match status" value="1"/>
</dbReference>
<dbReference type="SUPFAM" id="SSF55469">
    <property type="entry name" value="FMN-dependent nitroreductase-like"/>
    <property type="match status" value="1"/>
</dbReference>
<name>CHRR_PSEUG</name>
<comment type="cofactor">
    <cofactor evidence="1">
        <name>FMN</name>
        <dbReference type="ChEBI" id="CHEBI:58210"/>
    </cofactor>
</comment>
<comment type="similarity">
    <text evidence="2">Belongs to the flavin oxidoreductase frp family.</text>
</comment>
<organism>
    <name type="scientific">Pseudomonas sp. (strain G-1)</name>
    <dbReference type="NCBI Taxonomy" id="79677"/>
    <lineage>
        <taxon>Bacteria</taxon>
        <taxon>Pseudomonadati</taxon>
        <taxon>Pseudomonadota</taxon>
    </lineage>
</organism>
<feature type="chain" id="PRO_0000205509" description="CR(VI) reductase">
    <location>
        <begin position="1"/>
        <end position="243"/>
    </location>
</feature>
<proteinExistence type="inferred from homology"/>